<sequence>MVKFRFAPSPTGHLHAGNARLAVVNALAARAMGGTLLLRIDDTDRERSKPEYEAGIEQDLRWLGIGWDEMARQSDRMDRYAAAAERLKAAGLLYPCFESEEELAAKRALRAKRHLPPVYDRAMLSLTAEQRAAAEAGGKRPYFRFKLSDGAVAWNDLVLGRREVALGTVSDPVLIRADGTPLYTFTSVVDDLELGVTHVVRGEDHVTNTAVQIDLMRALEPRRAVPAFGHLPLISDVTGEKLSKRAGSVSVRQFRRDGIEAMALVSYLARLGSRRDPEPLTLEELAGTFDLGDFSRGAPRFDPKQLLALNRRVLHGLPFEAVAERLPEGCGAEFWMAVRGNLDLLSEARLWWEVVSGEIETPSLPEAASLLRAALEALPPEPWDETTWKGWTGAVAAASGARGKALYLPLRLALTGESHGPELAALLPLIGRARAAARLERAAG</sequence>
<feature type="chain" id="PRO_0000367596" description="Glutamate--tRNA ligase 2">
    <location>
        <begin position="1"/>
        <end position="444"/>
    </location>
</feature>
<feature type="short sequence motif" description="'HIGH' region" evidence="1">
    <location>
        <begin position="8"/>
        <end position="18"/>
    </location>
</feature>
<feature type="short sequence motif" description="'KMSKS' region" evidence="1">
    <location>
        <begin position="241"/>
        <end position="245"/>
    </location>
</feature>
<feature type="binding site" evidence="1">
    <location>
        <position position="244"/>
    </location>
    <ligand>
        <name>ATP</name>
        <dbReference type="ChEBI" id="CHEBI:30616"/>
    </ligand>
</feature>
<comment type="function">
    <text evidence="1">Catalyzes the attachment of glutamate to tRNA(Glu) in a two-step reaction: glutamate is first activated by ATP to form Glu-AMP and then transferred to the acceptor end of tRNA(Glu).</text>
</comment>
<comment type="catalytic activity">
    <reaction evidence="1">
        <text>tRNA(Glu) + L-glutamate + ATP = L-glutamyl-tRNA(Glu) + AMP + diphosphate</text>
        <dbReference type="Rhea" id="RHEA:23540"/>
        <dbReference type="Rhea" id="RHEA-COMP:9663"/>
        <dbReference type="Rhea" id="RHEA-COMP:9680"/>
        <dbReference type="ChEBI" id="CHEBI:29985"/>
        <dbReference type="ChEBI" id="CHEBI:30616"/>
        <dbReference type="ChEBI" id="CHEBI:33019"/>
        <dbReference type="ChEBI" id="CHEBI:78442"/>
        <dbReference type="ChEBI" id="CHEBI:78520"/>
        <dbReference type="ChEBI" id="CHEBI:456215"/>
        <dbReference type="EC" id="6.1.1.17"/>
    </reaction>
</comment>
<comment type="subunit">
    <text evidence="1">Monomer.</text>
</comment>
<comment type="subcellular location">
    <subcellularLocation>
        <location evidence="1">Cytoplasm</location>
    </subcellularLocation>
</comment>
<comment type="similarity">
    <text evidence="1">Belongs to the class-I aminoacyl-tRNA synthetase family. Glutamate--tRNA ligase type 1 subfamily.</text>
</comment>
<reference key="1">
    <citation type="submission" date="2007-05" db="EMBL/GenBank/DDBJ databases">
        <title>Complete sequence of chromosome of Acidiphilium cryptum JF-5.</title>
        <authorList>
            <consortium name="US DOE Joint Genome Institute"/>
            <person name="Copeland A."/>
            <person name="Lucas S."/>
            <person name="Lapidus A."/>
            <person name="Barry K."/>
            <person name="Detter J.C."/>
            <person name="Glavina del Rio T."/>
            <person name="Hammon N."/>
            <person name="Israni S."/>
            <person name="Dalin E."/>
            <person name="Tice H."/>
            <person name="Pitluck S."/>
            <person name="Sims D."/>
            <person name="Brettin T."/>
            <person name="Bruce D."/>
            <person name="Han C."/>
            <person name="Schmutz J."/>
            <person name="Larimer F."/>
            <person name="Land M."/>
            <person name="Hauser L."/>
            <person name="Kyrpides N."/>
            <person name="Kim E."/>
            <person name="Magnuson T."/>
            <person name="Richardson P."/>
        </authorList>
    </citation>
    <scope>NUCLEOTIDE SEQUENCE [LARGE SCALE GENOMIC DNA]</scope>
    <source>
        <strain>JF-5</strain>
    </source>
</reference>
<evidence type="ECO:0000255" key="1">
    <source>
        <dbReference type="HAMAP-Rule" id="MF_00022"/>
    </source>
</evidence>
<organism>
    <name type="scientific">Acidiphilium cryptum (strain JF-5)</name>
    <dbReference type="NCBI Taxonomy" id="349163"/>
    <lineage>
        <taxon>Bacteria</taxon>
        <taxon>Pseudomonadati</taxon>
        <taxon>Pseudomonadota</taxon>
        <taxon>Alphaproteobacteria</taxon>
        <taxon>Acetobacterales</taxon>
        <taxon>Acidocellaceae</taxon>
        <taxon>Acidiphilium</taxon>
    </lineage>
</organism>
<proteinExistence type="inferred from homology"/>
<keyword id="KW-0030">Aminoacyl-tRNA synthetase</keyword>
<keyword id="KW-0067">ATP-binding</keyword>
<keyword id="KW-0963">Cytoplasm</keyword>
<keyword id="KW-0436">Ligase</keyword>
<keyword id="KW-0547">Nucleotide-binding</keyword>
<keyword id="KW-0648">Protein biosynthesis</keyword>
<keyword id="KW-1185">Reference proteome</keyword>
<name>SYE2_ACICJ</name>
<gene>
    <name evidence="1" type="primary">gltX2</name>
    <name type="ordered locus">Acry_2675</name>
</gene>
<dbReference type="EC" id="6.1.1.17" evidence="1"/>
<dbReference type="EMBL" id="CP000697">
    <property type="protein sequence ID" value="ABQ31866.1"/>
    <property type="molecule type" value="Genomic_DNA"/>
</dbReference>
<dbReference type="RefSeq" id="WP_012040226.1">
    <property type="nucleotide sequence ID" value="NC_009484.1"/>
</dbReference>
<dbReference type="SMR" id="A5G1Y4"/>
<dbReference type="STRING" id="349163.Acry_2675"/>
<dbReference type="KEGG" id="acr:Acry_2675"/>
<dbReference type="eggNOG" id="COG0008">
    <property type="taxonomic scope" value="Bacteria"/>
</dbReference>
<dbReference type="HOGENOM" id="CLU_015768_6_1_5"/>
<dbReference type="Proteomes" id="UP000000245">
    <property type="component" value="Chromosome"/>
</dbReference>
<dbReference type="GO" id="GO:0005829">
    <property type="term" value="C:cytosol"/>
    <property type="evidence" value="ECO:0007669"/>
    <property type="project" value="TreeGrafter"/>
</dbReference>
<dbReference type="GO" id="GO:0005524">
    <property type="term" value="F:ATP binding"/>
    <property type="evidence" value="ECO:0007669"/>
    <property type="project" value="UniProtKB-UniRule"/>
</dbReference>
<dbReference type="GO" id="GO:0004818">
    <property type="term" value="F:glutamate-tRNA ligase activity"/>
    <property type="evidence" value="ECO:0007669"/>
    <property type="project" value="UniProtKB-UniRule"/>
</dbReference>
<dbReference type="GO" id="GO:0000049">
    <property type="term" value="F:tRNA binding"/>
    <property type="evidence" value="ECO:0007669"/>
    <property type="project" value="InterPro"/>
</dbReference>
<dbReference type="GO" id="GO:0006424">
    <property type="term" value="P:glutamyl-tRNA aminoacylation"/>
    <property type="evidence" value="ECO:0007669"/>
    <property type="project" value="UniProtKB-UniRule"/>
</dbReference>
<dbReference type="Gene3D" id="1.10.10.350">
    <property type="match status" value="1"/>
</dbReference>
<dbReference type="Gene3D" id="3.40.50.620">
    <property type="entry name" value="HUPs"/>
    <property type="match status" value="1"/>
</dbReference>
<dbReference type="HAMAP" id="MF_00022">
    <property type="entry name" value="Glu_tRNA_synth_type1"/>
    <property type="match status" value="1"/>
</dbReference>
<dbReference type="InterPro" id="IPR045462">
    <property type="entry name" value="aa-tRNA-synth_I_cd-bd"/>
</dbReference>
<dbReference type="InterPro" id="IPR020751">
    <property type="entry name" value="aa-tRNA-synth_I_codon-bd_sub2"/>
</dbReference>
<dbReference type="InterPro" id="IPR001412">
    <property type="entry name" value="aa-tRNA-synth_I_CS"/>
</dbReference>
<dbReference type="InterPro" id="IPR008925">
    <property type="entry name" value="aa_tRNA-synth_I_cd-bd_sf"/>
</dbReference>
<dbReference type="InterPro" id="IPR004527">
    <property type="entry name" value="Glu-tRNA-ligase_bac/mito"/>
</dbReference>
<dbReference type="InterPro" id="IPR000924">
    <property type="entry name" value="Glu/Gln-tRNA-synth"/>
</dbReference>
<dbReference type="InterPro" id="IPR020058">
    <property type="entry name" value="Glu/Gln-tRNA-synth_Ib_cat-dom"/>
</dbReference>
<dbReference type="InterPro" id="IPR049940">
    <property type="entry name" value="GluQ/Sye"/>
</dbReference>
<dbReference type="InterPro" id="IPR014729">
    <property type="entry name" value="Rossmann-like_a/b/a_fold"/>
</dbReference>
<dbReference type="NCBIfam" id="TIGR00464">
    <property type="entry name" value="gltX_bact"/>
    <property type="match status" value="1"/>
</dbReference>
<dbReference type="PANTHER" id="PTHR43311">
    <property type="entry name" value="GLUTAMATE--TRNA LIGASE"/>
    <property type="match status" value="1"/>
</dbReference>
<dbReference type="PANTHER" id="PTHR43311:SF2">
    <property type="entry name" value="GLUTAMATE--TRNA LIGASE, MITOCHONDRIAL-RELATED"/>
    <property type="match status" value="1"/>
</dbReference>
<dbReference type="Pfam" id="PF19269">
    <property type="entry name" value="Anticodon_2"/>
    <property type="match status" value="1"/>
</dbReference>
<dbReference type="Pfam" id="PF00749">
    <property type="entry name" value="tRNA-synt_1c"/>
    <property type="match status" value="1"/>
</dbReference>
<dbReference type="PRINTS" id="PR00987">
    <property type="entry name" value="TRNASYNTHGLU"/>
</dbReference>
<dbReference type="SUPFAM" id="SSF48163">
    <property type="entry name" value="An anticodon-binding domain of class I aminoacyl-tRNA synthetases"/>
    <property type="match status" value="1"/>
</dbReference>
<dbReference type="SUPFAM" id="SSF52374">
    <property type="entry name" value="Nucleotidylyl transferase"/>
    <property type="match status" value="1"/>
</dbReference>
<dbReference type="PROSITE" id="PS00178">
    <property type="entry name" value="AA_TRNA_LIGASE_I"/>
    <property type="match status" value="1"/>
</dbReference>
<accession>A5G1Y4</accession>
<protein>
    <recommendedName>
        <fullName evidence="1">Glutamate--tRNA ligase 2</fullName>
        <ecNumber evidence="1">6.1.1.17</ecNumber>
    </recommendedName>
    <alternativeName>
        <fullName evidence="1">Glutamyl-tRNA synthetase 2</fullName>
        <shortName evidence="1">GluRS 2</shortName>
    </alternativeName>
</protein>